<keyword id="KW-0997">Cell inner membrane</keyword>
<keyword id="KW-1003">Cell membrane</keyword>
<keyword id="KW-0472">Membrane</keyword>
<keyword id="KW-0520">NAD</keyword>
<keyword id="KW-0874">Quinone</keyword>
<keyword id="KW-1278">Translocase</keyword>
<keyword id="KW-0812">Transmembrane</keyword>
<keyword id="KW-1133">Transmembrane helix</keyword>
<keyword id="KW-0813">Transport</keyword>
<keyword id="KW-0830">Ubiquinone</keyword>
<comment type="function">
    <text evidence="1">NDH-1 shuttles electrons from NADH, via FMN and iron-sulfur (Fe-S) centers, to quinones in the respiratory chain. The immediate electron acceptor for the enzyme in this species is believed to be ubiquinone. Couples the redox reaction to proton translocation (for every two electrons transferred, four hydrogen ions are translocated across the cytoplasmic membrane), and thus conserves the redox energy in a proton gradient.</text>
</comment>
<comment type="catalytic activity">
    <reaction evidence="1">
        <text>a quinone + NADH + 5 H(+)(in) = a quinol + NAD(+) + 4 H(+)(out)</text>
        <dbReference type="Rhea" id="RHEA:57888"/>
        <dbReference type="ChEBI" id="CHEBI:15378"/>
        <dbReference type="ChEBI" id="CHEBI:24646"/>
        <dbReference type="ChEBI" id="CHEBI:57540"/>
        <dbReference type="ChEBI" id="CHEBI:57945"/>
        <dbReference type="ChEBI" id="CHEBI:132124"/>
    </reaction>
</comment>
<comment type="subunit">
    <text evidence="1">NDH-1 is composed of 14 different subunits. Subunits NuoA, H, J, K, L, M, N constitute the membrane sector of the complex.</text>
</comment>
<comment type="subcellular location">
    <subcellularLocation>
        <location evidence="1">Cell inner membrane</location>
        <topology evidence="1">Multi-pass membrane protein</topology>
    </subcellularLocation>
</comment>
<comment type="similarity">
    <text evidence="1">Belongs to the complex I subunit 4L family.</text>
</comment>
<organism>
    <name type="scientific">Hydrogenobaculum sp. (strain Y04AAS1)</name>
    <dbReference type="NCBI Taxonomy" id="380749"/>
    <lineage>
        <taxon>Bacteria</taxon>
        <taxon>Pseudomonadati</taxon>
        <taxon>Aquificota</taxon>
        <taxon>Aquificia</taxon>
        <taxon>Aquificales</taxon>
        <taxon>Aquificaceae</taxon>
        <taxon>Hydrogenobaculum</taxon>
    </lineage>
</organism>
<proteinExistence type="inferred from homology"/>
<gene>
    <name evidence="1" type="primary">nuoK</name>
    <name type="ordered locus">HY04AAS1_0761</name>
</gene>
<dbReference type="EC" id="7.1.1.-" evidence="1"/>
<dbReference type="EMBL" id="CP001130">
    <property type="protein sequence ID" value="ACG57448.1"/>
    <property type="molecule type" value="Genomic_DNA"/>
</dbReference>
<dbReference type="RefSeq" id="WP_012513804.1">
    <property type="nucleotide sequence ID" value="NC_011126.1"/>
</dbReference>
<dbReference type="SMR" id="B4U8I7"/>
<dbReference type="STRING" id="380749.HY04AAS1_0761"/>
<dbReference type="KEGG" id="hya:HY04AAS1_0761"/>
<dbReference type="eggNOG" id="COG0713">
    <property type="taxonomic scope" value="Bacteria"/>
</dbReference>
<dbReference type="HOGENOM" id="CLU_144724_1_1_0"/>
<dbReference type="GO" id="GO:0030964">
    <property type="term" value="C:NADH dehydrogenase complex"/>
    <property type="evidence" value="ECO:0007669"/>
    <property type="project" value="TreeGrafter"/>
</dbReference>
<dbReference type="GO" id="GO:0005886">
    <property type="term" value="C:plasma membrane"/>
    <property type="evidence" value="ECO:0007669"/>
    <property type="project" value="UniProtKB-SubCell"/>
</dbReference>
<dbReference type="GO" id="GO:0050136">
    <property type="term" value="F:NADH:ubiquinone reductase (non-electrogenic) activity"/>
    <property type="evidence" value="ECO:0007669"/>
    <property type="project" value="UniProtKB-UniRule"/>
</dbReference>
<dbReference type="GO" id="GO:0048038">
    <property type="term" value="F:quinone binding"/>
    <property type="evidence" value="ECO:0007669"/>
    <property type="project" value="UniProtKB-KW"/>
</dbReference>
<dbReference type="GO" id="GO:0042773">
    <property type="term" value="P:ATP synthesis coupled electron transport"/>
    <property type="evidence" value="ECO:0007669"/>
    <property type="project" value="InterPro"/>
</dbReference>
<dbReference type="FunFam" id="1.10.287.3510:FF:000001">
    <property type="entry name" value="NADH-quinone oxidoreductase subunit K"/>
    <property type="match status" value="1"/>
</dbReference>
<dbReference type="Gene3D" id="1.10.287.3510">
    <property type="match status" value="1"/>
</dbReference>
<dbReference type="HAMAP" id="MF_01456">
    <property type="entry name" value="NDH1_NuoK"/>
    <property type="match status" value="1"/>
</dbReference>
<dbReference type="InterPro" id="IPR001133">
    <property type="entry name" value="NADH_UbQ_OxRdtase_chain4L/K"/>
</dbReference>
<dbReference type="InterPro" id="IPR039428">
    <property type="entry name" value="NUOK/Mnh_C1-like"/>
</dbReference>
<dbReference type="NCBIfam" id="NF004320">
    <property type="entry name" value="PRK05715.1-2"/>
    <property type="match status" value="1"/>
</dbReference>
<dbReference type="PANTHER" id="PTHR11434:SF16">
    <property type="entry name" value="NADH-UBIQUINONE OXIDOREDUCTASE CHAIN 4L"/>
    <property type="match status" value="1"/>
</dbReference>
<dbReference type="PANTHER" id="PTHR11434">
    <property type="entry name" value="NADH-UBIQUINONE OXIDOREDUCTASE SUBUNIT ND4L"/>
    <property type="match status" value="1"/>
</dbReference>
<dbReference type="Pfam" id="PF00420">
    <property type="entry name" value="Oxidored_q2"/>
    <property type="match status" value="1"/>
</dbReference>
<evidence type="ECO:0000255" key="1">
    <source>
        <dbReference type="HAMAP-Rule" id="MF_01456"/>
    </source>
</evidence>
<sequence length="110" mass="12017">MIETIASKLLVQNVSQYFILSFILLGIGLFGMMVRKNLITILMSLELALNSVNIAFVGIDRLNHLIDGEIFALFTIALAAAEAAVGLGIILSLFRLRKAENVNEIIDLKG</sequence>
<feature type="chain" id="PRO_0000390099" description="NADH-quinone oxidoreductase subunit K">
    <location>
        <begin position="1"/>
        <end position="110"/>
    </location>
</feature>
<feature type="transmembrane region" description="Helical" evidence="1">
    <location>
        <begin position="14"/>
        <end position="34"/>
    </location>
</feature>
<feature type="transmembrane region" description="Helical" evidence="1">
    <location>
        <begin position="39"/>
        <end position="59"/>
    </location>
</feature>
<feature type="transmembrane region" description="Helical" evidence="1">
    <location>
        <begin position="70"/>
        <end position="90"/>
    </location>
</feature>
<accession>B4U8I7</accession>
<reference key="1">
    <citation type="journal article" date="2009" name="J. Bacteriol.">
        <title>Complete and draft genome sequences of six members of the Aquificales.</title>
        <authorList>
            <person name="Reysenbach A.-L."/>
            <person name="Hamamura N."/>
            <person name="Podar M."/>
            <person name="Griffiths E."/>
            <person name="Ferreira S."/>
            <person name="Hochstein R."/>
            <person name="Heidelberg J."/>
            <person name="Johnson J."/>
            <person name="Mead D."/>
            <person name="Pohorille A."/>
            <person name="Sarmiento M."/>
            <person name="Schweighofer K."/>
            <person name="Seshadri R."/>
            <person name="Voytek M.A."/>
        </authorList>
    </citation>
    <scope>NUCLEOTIDE SEQUENCE [LARGE SCALE GENOMIC DNA]</scope>
    <source>
        <strain>Y04AAS1</strain>
    </source>
</reference>
<name>NUOK_HYDS0</name>
<protein>
    <recommendedName>
        <fullName evidence="1">NADH-quinone oxidoreductase subunit K</fullName>
        <ecNumber evidence="1">7.1.1.-</ecNumber>
    </recommendedName>
    <alternativeName>
        <fullName evidence="1">NADH dehydrogenase I subunit K</fullName>
    </alternativeName>
    <alternativeName>
        <fullName evidence="1">NDH-1 subunit K</fullName>
    </alternativeName>
</protein>